<comment type="catalytic activity">
    <reaction evidence="1">
        <text>1-(5-phospho-beta-D-ribosyl)-ATP + H2O = 1-(5-phospho-beta-D-ribosyl)-5'-AMP + diphosphate + H(+)</text>
        <dbReference type="Rhea" id="RHEA:22828"/>
        <dbReference type="ChEBI" id="CHEBI:15377"/>
        <dbReference type="ChEBI" id="CHEBI:15378"/>
        <dbReference type="ChEBI" id="CHEBI:33019"/>
        <dbReference type="ChEBI" id="CHEBI:59457"/>
        <dbReference type="ChEBI" id="CHEBI:73183"/>
        <dbReference type="EC" id="3.6.1.31"/>
    </reaction>
</comment>
<comment type="pathway">
    <text evidence="1">Amino-acid biosynthesis; L-histidine biosynthesis; L-histidine from 5-phospho-alpha-D-ribose 1-diphosphate: step 2/9.</text>
</comment>
<comment type="subcellular location">
    <subcellularLocation>
        <location evidence="1">Cytoplasm</location>
    </subcellularLocation>
</comment>
<comment type="similarity">
    <text evidence="1">Belongs to the PRA-PH family.</text>
</comment>
<evidence type="ECO:0000255" key="1">
    <source>
        <dbReference type="HAMAP-Rule" id="MF_01020"/>
    </source>
</evidence>
<protein>
    <recommendedName>
        <fullName evidence="1">Phosphoribosyl-ATP pyrophosphatase</fullName>
        <shortName evidence="1">PRA-PH</shortName>
        <ecNumber evidence="1">3.6.1.31</ecNumber>
    </recommendedName>
</protein>
<organism>
    <name type="scientific">Pseudomonas syringae pv. syringae (strain B728a)</name>
    <dbReference type="NCBI Taxonomy" id="205918"/>
    <lineage>
        <taxon>Bacteria</taxon>
        <taxon>Pseudomonadati</taxon>
        <taxon>Pseudomonadota</taxon>
        <taxon>Gammaproteobacteria</taxon>
        <taxon>Pseudomonadales</taxon>
        <taxon>Pseudomonadaceae</taxon>
        <taxon>Pseudomonas</taxon>
        <taxon>Pseudomonas syringae</taxon>
    </lineage>
</organism>
<name>HIS2_PSEU2</name>
<dbReference type="EC" id="3.6.1.31" evidence="1"/>
<dbReference type="EMBL" id="CP000075">
    <property type="protein sequence ID" value="AAY35455.1"/>
    <property type="molecule type" value="Genomic_DNA"/>
</dbReference>
<dbReference type="RefSeq" id="WP_011266366.1">
    <property type="nucleotide sequence ID" value="NC_007005.1"/>
</dbReference>
<dbReference type="RefSeq" id="YP_233493.1">
    <property type="nucleotide sequence ID" value="NC_007005.1"/>
</dbReference>
<dbReference type="SMR" id="Q4ZZG7"/>
<dbReference type="STRING" id="205918.Psyr_0385"/>
<dbReference type="KEGG" id="psb:Psyr_0385"/>
<dbReference type="PATRIC" id="fig|205918.7.peg.398"/>
<dbReference type="eggNOG" id="COG0140">
    <property type="taxonomic scope" value="Bacteria"/>
</dbReference>
<dbReference type="HOGENOM" id="CLU_123337_1_2_6"/>
<dbReference type="OrthoDB" id="9814738at2"/>
<dbReference type="UniPathway" id="UPA00031">
    <property type="reaction ID" value="UER00007"/>
</dbReference>
<dbReference type="Proteomes" id="UP000000426">
    <property type="component" value="Chromosome"/>
</dbReference>
<dbReference type="GO" id="GO:0005737">
    <property type="term" value="C:cytoplasm"/>
    <property type="evidence" value="ECO:0007669"/>
    <property type="project" value="UniProtKB-SubCell"/>
</dbReference>
<dbReference type="GO" id="GO:0005524">
    <property type="term" value="F:ATP binding"/>
    <property type="evidence" value="ECO:0007669"/>
    <property type="project" value="UniProtKB-KW"/>
</dbReference>
<dbReference type="GO" id="GO:0004636">
    <property type="term" value="F:phosphoribosyl-ATP diphosphatase activity"/>
    <property type="evidence" value="ECO:0007669"/>
    <property type="project" value="UniProtKB-UniRule"/>
</dbReference>
<dbReference type="GO" id="GO:0000105">
    <property type="term" value="P:L-histidine biosynthetic process"/>
    <property type="evidence" value="ECO:0007669"/>
    <property type="project" value="UniProtKB-UniRule"/>
</dbReference>
<dbReference type="CDD" id="cd11534">
    <property type="entry name" value="NTP-PPase_HisIE_like"/>
    <property type="match status" value="1"/>
</dbReference>
<dbReference type="Gene3D" id="1.10.287.1080">
    <property type="entry name" value="MazG-like"/>
    <property type="match status" value="1"/>
</dbReference>
<dbReference type="HAMAP" id="MF_01020">
    <property type="entry name" value="HisE"/>
    <property type="match status" value="1"/>
</dbReference>
<dbReference type="InterPro" id="IPR008179">
    <property type="entry name" value="HisE"/>
</dbReference>
<dbReference type="InterPro" id="IPR021130">
    <property type="entry name" value="PRib-ATP_PPHydrolase-like"/>
</dbReference>
<dbReference type="NCBIfam" id="TIGR03188">
    <property type="entry name" value="histidine_hisI"/>
    <property type="match status" value="1"/>
</dbReference>
<dbReference type="NCBIfam" id="NF001611">
    <property type="entry name" value="PRK00400.1-3"/>
    <property type="match status" value="1"/>
</dbReference>
<dbReference type="PANTHER" id="PTHR42945">
    <property type="entry name" value="HISTIDINE BIOSYNTHESIS BIFUNCTIONAL PROTEIN"/>
    <property type="match status" value="1"/>
</dbReference>
<dbReference type="PANTHER" id="PTHR42945:SF9">
    <property type="entry name" value="HISTIDINE BIOSYNTHESIS BIFUNCTIONAL PROTEIN HISIE"/>
    <property type="match status" value="1"/>
</dbReference>
<dbReference type="Pfam" id="PF01503">
    <property type="entry name" value="PRA-PH"/>
    <property type="match status" value="1"/>
</dbReference>
<dbReference type="SUPFAM" id="SSF101386">
    <property type="entry name" value="all-alpha NTP pyrophosphatases"/>
    <property type="match status" value="1"/>
</dbReference>
<proteinExistence type="inferred from homology"/>
<sequence length="110" mass="11935">MTDTLSRLAEVLESRKDAAADSSYVASLYHKGLNKILEKLGEESIETIIAAKDAAVSGNCSDVIYETADLWFHSMVMLAALGQHPQAVLDELDRRFGLSGHAEKAARTAE</sequence>
<accession>Q4ZZG7</accession>
<reference key="1">
    <citation type="journal article" date="2005" name="Proc. Natl. Acad. Sci. U.S.A.">
        <title>Comparison of the complete genome sequences of Pseudomonas syringae pv. syringae B728a and pv. tomato DC3000.</title>
        <authorList>
            <person name="Feil H."/>
            <person name="Feil W.S."/>
            <person name="Chain P."/>
            <person name="Larimer F."/>
            <person name="Dibartolo G."/>
            <person name="Copeland A."/>
            <person name="Lykidis A."/>
            <person name="Trong S."/>
            <person name="Nolan M."/>
            <person name="Goltsman E."/>
            <person name="Thiel J."/>
            <person name="Malfatti S."/>
            <person name="Loper J.E."/>
            <person name="Lapidus A."/>
            <person name="Detter J.C."/>
            <person name="Land M."/>
            <person name="Richardson P.M."/>
            <person name="Kyrpides N.C."/>
            <person name="Ivanova N."/>
            <person name="Lindow S.E."/>
        </authorList>
    </citation>
    <scope>NUCLEOTIDE SEQUENCE [LARGE SCALE GENOMIC DNA]</scope>
    <source>
        <strain>B728a</strain>
    </source>
</reference>
<keyword id="KW-0028">Amino-acid biosynthesis</keyword>
<keyword id="KW-0067">ATP-binding</keyword>
<keyword id="KW-0963">Cytoplasm</keyword>
<keyword id="KW-0368">Histidine biosynthesis</keyword>
<keyword id="KW-0378">Hydrolase</keyword>
<keyword id="KW-0547">Nucleotide-binding</keyword>
<gene>
    <name evidence="1" type="primary">hisE</name>
    <name type="ordered locus">Psyr_0385</name>
</gene>
<feature type="chain" id="PRO_0000230188" description="Phosphoribosyl-ATP pyrophosphatase">
    <location>
        <begin position="1"/>
        <end position="110"/>
    </location>
</feature>